<comment type="function">
    <text evidence="1">Actin cross-linking/gelling protein.</text>
</comment>
<comment type="subunit">
    <text>Monomer.</text>
</comment>
<comment type="subcellular location">
    <subcellularLocation>
        <location evidence="4">Cytoplasm</location>
    </subcellularLocation>
</comment>
<comment type="tissue specificity">
    <text>Gizzard, uterus, intestine, esophagus, aorta, and trace amounts in brain, liver and heart.</text>
</comment>
<comment type="similarity">
    <text evidence="4">Belongs to the calponin family.</text>
</comment>
<sequence>MANKGPAYGMSRDVQSKIEKKYDDELEDRLVEWIVAQCGSSVGRPDRGRLGFQVWLKNGIVLSQLVNSLYPDGSKPVKIPDSPPTMVFKQMEQIAQFLKAAEDYGVVKTDMFQTVDLFEAKDMAAVQRTLVALGSLAVTKNDGHYHGDPNWFMKKAQEHKREFSESQLKEGKNIIGLQMGTNKGASQAGMSYGRPRQIIS</sequence>
<reference key="1">
    <citation type="journal article" date="1991" name="Biochem. Int.">
        <title>Gene cloning and nucleotide sequence of SM22 alpha from the chicken gizzard smooth muscle.</title>
        <authorList>
            <person name="Nishida W."/>
            <person name="Kitami Y."/>
            <person name="Abe M."/>
            <person name="Kiwada K."/>
        </authorList>
    </citation>
    <scope>NUCLEOTIDE SEQUENCE [MRNA]</scope>
    <source>
        <tissue>Gizzard smooth muscle</tissue>
    </source>
</reference>
<reference key="2">
    <citation type="journal article" date="1987" name="J. Biol. Chem.">
        <title>Amino acid sequence of chicken gizzard smooth muscle SM22 alpha.</title>
        <authorList>
            <person name="Pearlstone J.R."/>
            <person name="Weber M."/>
            <person name="Lees-Miller J.P."/>
            <person name="Carpenter M.R."/>
            <person name="Smillie L.B."/>
        </authorList>
    </citation>
    <scope>PROTEIN SEQUENCE OF 2-198</scope>
    <scope>ACETYLATION AT ALA-2</scope>
    <source>
        <tissue>Gizzard smooth muscle</tissue>
    </source>
</reference>
<protein>
    <recommendedName>
        <fullName>Transgelin</fullName>
    </recommendedName>
    <alternativeName>
        <fullName>Smooth muscle protein 22-alpha</fullName>
        <shortName>SM22-alpha</shortName>
    </alternativeName>
</protein>
<gene>
    <name type="primary">TAGLN</name>
    <name type="synonym">SM22</name>
</gene>
<keyword id="KW-0007">Acetylation</keyword>
<keyword id="KW-0963">Cytoplasm</keyword>
<keyword id="KW-0903">Direct protein sequencing</keyword>
<keyword id="KW-0514">Muscle protein</keyword>
<keyword id="KW-1185">Reference proteome</keyword>
<proteinExistence type="evidence at protein level"/>
<name>TAGL_CHICK</name>
<evidence type="ECO:0000250" key="1"/>
<evidence type="ECO:0000255" key="2">
    <source>
        <dbReference type="PROSITE-ProRule" id="PRU00044"/>
    </source>
</evidence>
<evidence type="ECO:0000269" key="3">
    <source>
    </source>
</evidence>
<evidence type="ECO:0000305" key="4"/>
<organism>
    <name type="scientific">Gallus gallus</name>
    <name type="common">Chicken</name>
    <dbReference type="NCBI Taxonomy" id="9031"/>
    <lineage>
        <taxon>Eukaryota</taxon>
        <taxon>Metazoa</taxon>
        <taxon>Chordata</taxon>
        <taxon>Craniata</taxon>
        <taxon>Vertebrata</taxon>
        <taxon>Euteleostomi</taxon>
        <taxon>Archelosauria</taxon>
        <taxon>Archosauria</taxon>
        <taxon>Dinosauria</taxon>
        <taxon>Saurischia</taxon>
        <taxon>Theropoda</taxon>
        <taxon>Coelurosauria</taxon>
        <taxon>Aves</taxon>
        <taxon>Neognathae</taxon>
        <taxon>Galloanserae</taxon>
        <taxon>Galliformes</taxon>
        <taxon>Phasianidae</taxon>
        <taxon>Phasianinae</taxon>
        <taxon>Gallus</taxon>
    </lineage>
</organism>
<dbReference type="EMBL" id="M83105">
    <property type="protein sequence ID" value="AAA48782.1"/>
    <property type="molecule type" value="mRNA"/>
</dbReference>
<dbReference type="PIR" id="I50236">
    <property type="entry name" value="A26694"/>
</dbReference>
<dbReference type="RefSeq" id="NP_990825.1">
    <property type="nucleotide sequence ID" value="NM_205494.2"/>
</dbReference>
<dbReference type="RefSeq" id="XP_015153456.1">
    <property type="nucleotide sequence ID" value="XM_015297970.4"/>
</dbReference>
<dbReference type="RefSeq" id="XP_046788264.1">
    <property type="nucleotide sequence ID" value="XM_046932308.1"/>
</dbReference>
<dbReference type="SMR" id="P19966"/>
<dbReference type="FunCoup" id="P19966">
    <property type="interactions" value="1378"/>
</dbReference>
<dbReference type="STRING" id="9031.ENSGALP00000019399"/>
<dbReference type="iPTMnet" id="P19966"/>
<dbReference type="PaxDb" id="9031-ENSGALP00000019399"/>
<dbReference type="GeneID" id="396490"/>
<dbReference type="KEGG" id="gga:396490"/>
<dbReference type="CTD" id="6876"/>
<dbReference type="VEuPathDB" id="HostDB:geneid_396490"/>
<dbReference type="eggNOG" id="KOG2046">
    <property type="taxonomic scope" value="Eukaryota"/>
</dbReference>
<dbReference type="HOGENOM" id="CLU_055232_1_0_1"/>
<dbReference type="InParanoid" id="P19966"/>
<dbReference type="OMA" id="NWFHRKA"/>
<dbReference type="OrthoDB" id="21595at2759"/>
<dbReference type="PhylomeDB" id="P19966"/>
<dbReference type="PRO" id="PR:P19966"/>
<dbReference type="Proteomes" id="UP000000539">
    <property type="component" value="Chromosome 24"/>
</dbReference>
<dbReference type="Bgee" id="ENSGALG00000011902">
    <property type="expression patterns" value="Expressed in colon and 13 other cell types or tissues"/>
</dbReference>
<dbReference type="GO" id="GO:0005737">
    <property type="term" value="C:cytoplasm"/>
    <property type="evidence" value="ECO:0007669"/>
    <property type="project" value="UniProtKB-SubCell"/>
</dbReference>
<dbReference type="CDD" id="cd21279">
    <property type="entry name" value="CH_TAGLN"/>
    <property type="match status" value="1"/>
</dbReference>
<dbReference type="FunFam" id="1.10.418.10:FF:000039">
    <property type="entry name" value="Transgelin"/>
    <property type="match status" value="1"/>
</dbReference>
<dbReference type="Gene3D" id="1.10.418.10">
    <property type="entry name" value="Calponin-like domain"/>
    <property type="match status" value="1"/>
</dbReference>
<dbReference type="InterPro" id="IPR050606">
    <property type="entry name" value="Calponin-like"/>
</dbReference>
<dbReference type="InterPro" id="IPR000557">
    <property type="entry name" value="Calponin_repeat"/>
</dbReference>
<dbReference type="InterPro" id="IPR001715">
    <property type="entry name" value="CH_dom"/>
</dbReference>
<dbReference type="InterPro" id="IPR036872">
    <property type="entry name" value="CH_dom_sf"/>
</dbReference>
<dbReference type="InterPro" id="IPR003096">
    <property type="entry name" value="SM22_calponin"/>
</dbReference>
<dbReference type="PANTHER" id="PTHR47385">
    <property type="entry name" value="CALPONIN"/>
    <property type="match status" value="1"/>
</dbReference>
<dbReference type="PANTHER" id="PTHR47385:SF16">
    <property type="entry name" value="TRANSGELIN"/>
    <property type="match status" value="1"/>
</dbReference>
<dbReference type="Pfam" id="PF00402">
    <property type="entry name" value="Calponin"/>
    <property type="match status" value="1"/>
</dbReference>
<dbReference type="Pfam" id="PF00307">
    <property type="entry name" value="CH"/>
    <property type="match status" value="1"/>
</dbReference>
<dbReference type="PRINTS" id="PR00888">
    <property type="entry name" value="SM22CALPONIN"/>
</dbReference>
<dbReference type="PRINTS" id="PR00890">
    <property type="entry name" value="TRANSGELIN"/>
</dbReference>
<dbReference type="SMART" id="SM00033">
    <property type="entry name" value="CH"/>
    <property type="match status" value="1"/>
</dbReference>
<dbReference type="SUPFAM" id="SSF47576">
    <property type="entry name" value="Calponin-homology domain, CH-domain"/>
    <property type="match status" value="1"/>
</dbReference>
<dbReference type="PROSITE" id="PS01052">
    <property type="entry name" value="CALPONIN_1"/>
    <property type="match status" value="1"/>
</dbReference>
<dbReference type="PROSITE" id="PS51122">
    <property type="entry name" value="CALPONIN_2"/>
    <property type="match status" value="1"/>
</dbReference>
<dbReference type="PROSITE" id="PS50021">
    <property type="entry name" value="CH"/>
    <property type="match status" value="1"/>
</dbReference>
<feature type="initiator methionine" description="Removed" evidence="3">
    <location>
        <position position="1"/>
    </location>
</feature>
<feature type="chain" id="PRO_0000204784" description="Transgelin">
    <location>
        <begin position="2"/>
        <end position="200"/>
    </location>
</feature>
<feature type="domain" description="Calponin-homology (CH)" evidence="2">
    <location>
        <begin position="24"/>
        <end position="137"/>
    </location>
</feature>
<feature type="repeat" description="Calponin-like">
    <location>
        <begin position="175"/>
        <end position="199"/>
    </location>
</feature>
<feature type="modified residue" description="N-acetylalanine" evidence="3">
    <location>
        <position position="2"/>
    </location>
</feature>
<accession>P19966</accession>